<name>NUSB_DESDA</name>
<gene>
    <name evidence="1" type="primary">nusB</name>
    <name type="ordered locus">Ddes_1622</name>
</gene>
<evidence type="ECO:0000255" key="1">
    <source>
        <dbReference type="HAMAP-Rule" id="MF_00073"/>
    </source>
</evidence>
<keyword id="KW-0694">RNA-binding</keyword>
<keyword id="KW-0804">Transcription</keyword>
<keyword id="KW-0889">Transcription antitermination</keyword>
<keyword id="KW-0805">Transcription regulation</keyword>
<comment type="function">
    <text evidence="1">Involved in transcription antitermination. Required for transcription of ribosomal RNA (rRNA) genes. Binds specifically to the boxA antiterminator sequence of the ribosomal RNA (rrn) operons.</text>
</comment>
<comment type="similarity">
    <text evidence="1">Belongs to the NusB family.</text>
</comment>
<feature type="chain" id="PRO_1000192434" description="Transcription antitermination protein NusB">
    <location>
        <begin position="1"/>
        <end position="164"/>
    </location>
</feature>
<sequence>MAKGKNATRRGERELAFQVLYGLSFTPARSLEELRRSFRMSPDNLARSEESGVPVEACGFSWELVEGVWSNSSALDETISRFSHNWRVDRMGRVELTLLRLAAYELVFRADVPPKVAINEALELSRQFGEGNAKNFINGILDAVAKALENGELQRCAAPSNTSI</sequence>
<reference key="1">
    <citation type="submission" date="2009-01" db="EMBL/GenBank/DDBJ databases">
        <title>Complete sequence of Desulfovibrio desulfuricans subsp. desulfuricans str. ATCC 27774.</title>
        <authorList>
            <consortium name="US DOE Joint Genome Institute"/>
            <person name="Lucas S."/>
            <person name="Copeland A."/>
            <person name="Lapidus A."/>
            <person name="Glavina del Rio T."/>
            <person name="Tice H."/>
            <person name="Bruce D."/>
            <person name="Goodwin L."/>
            <person name="Pitluck S."/>
            <person name="Sims D."/>
            <person name="Lu M."/>
            <person name="Kiss H."/>
            <person name="Meineke L."/>
            <person name="Brettin T."/>
            <person name="Detter J.C."/>
            <person name="Han C."/>
            <person name="Larimer F."/>
            <person name="Land M."/>
            <person name="Hauser L."/>
            <person name="Kyrpides N."/>
            <person name="Ovchinnikova G."/>
            <person name="Hazen T.C."/>
        </authorList>
    </citation>
    <scope>NUCLEOTIDE SEQUENCE [LARGE SCALE GENOMIC DNA]</scope>
    <source>
        <strain>ATCC 27774 / DSM 6949 / MB</strain>
    </source>
</reference>
<dbReference type="EMBL" id="CP001358">
    <property type="protein sequence ID" value="ACL49521.1"/>
    <property type="molecule type" value="Genomic_DNA"/>
</dbReference>
<dbReference type="SMR" id="B8J194"/>
<dbReference type="STRING" id="525146.Ddes_1622"/>
<dbReference type="KEGG" id="dds:Ddes_1622"/>
<dbReference type="eggNOG" id="COG0781">
    <property type="taxonomic scope" value="Bacteria"/>
</dbReference>
<dbReference type="HOGENOM" id="CLU_087843_3_3_7"/>
<dbReference type="GO" id="GO:0005829">
    <property type="term" value="C:cytosol"/>
    <property type="evidence" value="ECO:0007669"/>
    <property type="project" value="TreeGrafter"/>
</dbReference>
<dbReference type="GO" id="GO:0003723">
    <property type="term" value="F:RNA binding"/>
    <property type="evidence" value="ECO:0007669"/>
    <property type="project" value="UniProtKB-UniRule"/>
</dbReference>
<dbReference type="GO" id="GO:0006353">
    <property type="term" value="P:DNA-templated transcription termination"/>
    <property type="evidence" value="ECO:0007669"/>
    <property type="project" value="UniProtKB-UniRule"/>
</dbReference>
<dbReference type="GO" id="GO:0031564">
    <property type="term" value="P:transcription antitermination"/>
    <property type="evidence" value="ECO:0007669"/>
    <property type="project" value="UniProtKB-KW"/>
</dbReference>
<dbReference type="Gene3D" id="1.10.940.10">
    <property type="entry name" value="NusB-like"/>
    <property type="match status" value="1"/>
</dbReference>
<dbReference type="HAMAP" id="MF_00073">
    <property type="entry name" value="NusB"/>
    <property type="match status" value="1"/>
</dbReference>
<dbReference type="InterPro" id="IPR035926">
    <property type="entry name" value="NusB-like_sf"/>
</dbReference>
<dbReference type="InterPro" id="IPR011605">
    <property type="entry name" value="NusB_fam"/>
</dbReference>
<dbReference type="InterPro" id="IPR006027">
    <property type="entry name" value="NusB_RsmB_TIM44"/>
</dbReference>
<dbReference type="NCBIfam" id="TIGR01951">
    <property type="entry name" value="nusB"/>
    <property type="match status" value="1"/>
</dbReference>
<dbReference type="PANTHER" id="PTHR11078:SF3">
    <property type="entry name" value="ANTITERMINATION NUSB DOMAIN-CONTAINING PROTEIN"/>
    <property type="match status" value="1"/>
</dbReference>
<dbReference type="PANTHER" id="PTHR11078">
    <property type="entry name" value="N UTILIZATION SUBSTANCE PROTEIN B-RELATED"/>
    <property type="match status" value="1"/>
</dbReference>
<dbReference type="Pfam" id="PF01029">
    <property type="entry name" value="NusB"/>
    <property type="match status" value="1"/>
</dbReference>
<dbReference type="SUPFAM" id="SSF48013">
    <property type="entry name" value="NusB-like"/>
    <property type="match status" value="1"/>
</dbReference>
<organism>
    <name type="scientific">Desulfovibrio desulfuricans (strain ATCC 27774 / DSM 6949 / MB)</name>
    <dbReference type="NCBI Taxonomy" id="525146"/>
    <lineage>
        <taxon>Bacteria</taxon>
        <taxon>Pseudomonadati</taxon>
        <taxon>Thermodesulfobacteriota</taxon>
        <taxon>Desulfovibrionia</taxon>
        <taxon>Desulfovibrionales</taxon>
        <taxon>Desulfovibrionaceae</taxon>
        <taxon>Desulfovibrio</taxon>
    </lineage>
</organism>
<proteinExistence type="inferred from homology"/>
<protein>
    <recommendedName>
        <fullName evidence="1">Transcription antitermination protein NusB</fullName>
    </recommendedName>
    <alternativeName>
        <fullName evidence="1">Antitermination factor NusB</fullName>
    </alternativeName>
</protein>
<accession>B8J194</accession>